<gene>
    <name evidence="1" type="primary">allB</name>
    <name type="ordered locus">EC55989_0526</name>
</gene>
<accession>B7L7D8</accession>
<protein>
    <recommendedName>
        <fullName evidence="1">Allantoinase</fullName>
        <ecNumber evidence="1">3.5.2.5</ecNumber>
    </recommendedName>
    <alternativeName>
        <fullName evidence="1">Allantoin-utilizing enzyme</fullName>
    </alternativeName>
</protein>
<reference key="1">
    <citation type="journal article" date="2009" name="PLoS Genet.">
        <title>Organised genome dynamics in the Escherichia coli species results in highly diverse adaptive paths.</title>
        <authorList>
            <person name="Touchon M."/>
            <person name="Hoede C."/>
            <person name="Tenaillon O."/>
            <person name="Barbe V."/>
            <person name="Baeriswyl S."/>
            <person name="Bidet P."/>
            <person name="Bingen E."/>
            <person name="Bonacorsi S."/>
            <person name="Bouchier C."/>
            <person name="Bouvet O."/>
            <person name="Calteau A."/>
            <person name="Chiapello H."/>
            <person name="Clermont O."/>
            <person name="Cruveiller S."/>
            <person name="Danchin A."/>
            <person name="Diard M."/>
            <person name="Dossat C."/>
            <person name="Karoui M.E."/>
            <person name="Frapy E."/>
            <person name="Garry L."/>
            <person name="Ghigo J.M."/>
            <person name="Gilles A.M."/>
            <person name="Johnson J."/>
            <person name="Le Bouguenec C."/>
            <person name="Lescat M."/>
            <person name="Mangenot S."/>
            <person name="Martinez-Jehanne V."/>
            <person name="Matic I."/>
            <person name="Nassif X."/>
            <person name="Oztas S."/>
            <person name="Petit M.A."/>
            <person name="Pichon C."/>
            <person name="Rouy Z."/>
            <person name="Ruf C.S."/>
            <person name="Schneider D."/>
            <person name="Tourret J."/>
            <person name="Vacherie B."/>
            <person name="Vallenet D."/>
            <person name="Medigue C."/>
            <person name="Rocha E.P.C."/>
            <person name="Denamur E."/>
        </authorList>
    </citation>
    <scope>NUCLEOTIDE SEQUENCE [LARGE SCALE GENOMIC DNA]</scope>
    <source>
        <strain>55989 / EAEC</strain>
    </source>
</reference>
<name>ALLB_ECO55</name>
<feature type="chain" id="PRO_1000186919" description="Allantoinase">
    <location>
        <begin position="1"/>
        <end position="453"/>
    </location>
</feature>
<feature type="binding site" evidence="1">
    <location>
        <position position="59"/>
    </location>
    <ligand>
        <name>Zn(2+)</name>
        <dbReference type="ChEBI" id="CHEBI:29105"/>
        <label>1</label>
    </ligand>
</feature>
<feature type="binding site" evidence="1">
    <location>
        <position position="61"/>
    </location>
    <ligand>
        <name>Zn(2+)</name>
        <dbReference type="ChEBI" id="CHEBI:29105"/>
        <label>1</label>
    </ligand>
</feature>
<feature type="binding site" description="via carbamate group" evidence="1">
    <location>
        <position position="146"/>
    </location>
    <ligand>
        <name>Zn(2+)</name>
        <dbReference type="ChEBI" id="CHEBI:29105"/>
        <label>1</label>
    </ligand>
</feature>
<feature type="binding site" description="via carbamate group" evidence="1">
    <location>
        <position position="146"/>
    </location>
    <ligand>
        <name>Zn(2+)</name>
        <dbReference type="ChEBI" id="CHEBI:29105"/>
        <label>2</label>
    </ligand>
</feature>
<feature type="binding site" evidence="1">
    <location>
        <position position="186"/>
    </location>
    <ligand>
        <name>Zn(2+)</name>
        <dbReference type="ChEBI" id="CHEBI:29105"/>
        <label>2</label>
    </ligand>
</feature>
<feature type="binding site" evidence="1">
    <location>
        <position position="242"/>
    </location>
    <ligand>
        <name>Zn(2+)</name>
        <dbReference type="ChEBI" id="CHEBI:29105"/>
        <label>2</label>
    </ligand>
</feature>
<feature type="binding site" evidence="1">
    <location>
        <position position="315"/>
    </location>
    <ligand>
        <name>Zn(2+)</name>
        <dbReference type="ChEBI" id="CHEBI:29105"/>
        <label>1</label>
    </ligand>
</feature>
<feature type="modified residue" description="N6-carboxylysine" evidence="1">
    <location>
        <position position="146"/>
    </location>
</feature>
<dbReference type="EC" id="3.5.2.5" evidence="1"/>
<dbReference type="EMBL" id="CU928145">
    <property type="protein sequence ID" value="CAU96399.1"/>
    <property type="molecule type" value="Genomic_DNA"/>
</dbReference>
<dbReference type="RefSeq" id="WP_000006887.1">
    <property type="nucleotide sequence ID" value="NC_011748.1"/>
</dbReference>
<dbReference type="SMR" id="B7L7D8"/>
<dbReference type="GeneID" id="75204378"/>
<dbReference type="KEGG" id="eck:EC55989_0526"/>
<dbReference type="HOGENOM" id="CLU_015572_4_2_6"/>
<dbReference type="UniPathway" id="UPA00395">
    <property type="reaction ID" value="UER00653"/>
</dbReference>
<dbReference type="Proteomes" id="UP000000746">
    <property type="component" value="Chromosome"/>
</dbReference>
<dbReference type="GO" id="GO:0005737">
    <property type="term" value="C:cytoplasm"/>
    <property type="evidence" value="ECO:0007669"/>
    <property type="project" value="TreeGrafter"/>
</dbReference>
<dbReference type="GO" id="GO:0004038">
    <property type="term" value="F:allantoinase activity"/>
    <property type="evidence" value="ECO:0007669"/>
    <property type="project" value="UniProtKB-UniRule"/>
</dbReference>
<dbReference type="GO" id="GO:0050897">
    <property type="term" value="F:cobalt ion binding"/>
    <property type="evidence" value="ECO:0007669"/>
    <property type="project" value="InterPro"/>
</dbReference>
<dbReference type="GO" id="GO:0008270">
    <property type="term" value="F:zinc ion binding"/>
    <property type="evidence" value="ECO:0007669"/>
    <property type="project" value="InterPro"/>
</dbReference>
<dbReference type="GO" id="GO:0000256">
    <property type="term" value="P:allantoin catabolic process"/>
    <property type="evidence" value="ECO:0007669"/>
    <property type="project" value="UniProtKB-UniRule"/>
</dbReference>
<dbReference type="GO" id="GO:0006145">
    <property type="term" value="P:purine nucleobase catabolic process"/>
    <property type="evidence" value="ECO:0007669"/>
    <property type="project" value="TreeGrafter"/>
</dbReference>
<dbReference type="CDD" id="cd01315">
    <property type="entry name" value="L-HYD_ALN"/>
    <property type="match status" value="1"/>
</dbReference>
<dbReference type="FunFam" id="3.20.20.140:FF:000013">
    <property type="entry name" value="Allantoinase"/>
    <property type="match status" value="1"/>
</dbReference>
<dbReference type="Gene3D" id="3.20.20.140">
    <property type="entry name" value="Metal-dependent hydrolases"/>
    <property type="match status" value="1"/>
</dbReference>
<dbReference type="Gene3D" id="2.30.40.10">
    <property type="entry name" value="Urease, subunit C, domain 1"/>
    <property type="match status" value="1"/>
</dbReference>
<dbReference type="HAMAP" id="MF_01645">
    <property type="entry name" value="Hydantoinase"/>
    <property type="match status" value="1"/>
</dbReference>
<dbReference type="InterPro" id="IPR017593">
    <property type="entry name" value="Allantoinase"/>
</dbReference>
<dbReference type="InterPro" id="IPR047604">
    <property type="entry name" value="Allantoinase_bact"/>
</dbReference>
<dbReference type="InterPro" id="IPR006680">
    <property type="entry name" value="Amidohydro-rel"/>
</dbReference>
<dbReference type="InterPro" id="IPR050138">
    <property type="entry name" value="DHOase/Allantoinase_Hydrolase"/>
</dbReference>
<dbReference type="InterPro" id="IPR011059">
    <property type="entry name" value="Metal-dep_hydrolase_composite"/>
</dbReference>
<dbReference type="InterPro" id="IPR032466">
    <property type="entry name" value="Metal_Hydrolase"/>
</dbReference>
<dbReference type="NCBIfam" id="TIGR03178">
    <property type="entry name" value="allantoinase"/>
    <property type="match status" value="1"/>
</dbReference>
<dbReference type="NCBIfam" id="NF005960">
    <property type="entry name" value="PRK08044.1"/>
    <property type="match status" value="1"/>
</dbReference>
<dbReference type="PANTHER" id="PTHR43668">
    <property type="entry name" value="ALLANTOINASE"/>
    <property type="match status" value="1"/>
</dbReference>
<dbReference type="PANTHER" id="PTHR43668:SF4">
    <property type="entry name" value="ALLANTOINASE"/>
    <property type="match status" value="1"/>
</dbReference>
<dbReference type="Pfam" id="PF01979">
    <property type="entry name" value="Amidohydro_1"/>
    <property type="match status" value="1"/>
</dbReference>
<dbReference type="SUPFAM" id="SSF51338">
    <property type="entry name" value="Composite domain of metallo-dependent hydrolases"/>
    <property type="match status" value="1"/>
</dbReference>
<dbReference type="SUPFAM" id="SSF51556">
    <property type="entry name" value="Metallo-dependent hydrolases"/>
    <property type="match status" value="1"/>
</dbReference>
<proteinExistence type="inferred from homology"/>
<organism>
    <name type="scientific">Escherichia coli (strain 55989 / EAEC)</name>
    <dbReference type="NCBI Taxonomy" id="585055"/>
    <lineage>
        <taxon>Bacteria</taxon>
        <taxon>Pseudomonadati</taxon>
        <taxon>Pseudomonadota</taxon>
        <taxon>Gammaproteobacteria</taxon>
        <taxon>Enterobacterales</taxon>
        <taxon>Enterobacteriaceae</taxon>
        <taxon>Escherichia</taxon>
    </lineage>
</organism>
<evidence type="ECO:0000255" key="1">
    <source>
        <dbReference type="HAMAP-Rule" id="MF_01645"/>
    </source>
</evidence>
<comment type="function">
    <text evidence="1">Catalyzes the conversion of allantoin (5-ureidohydantoin) to allantoic acid by hydrolytic cleavage of the five-member hydantoin ring.</text>
</comment>
<comment type="catalytic activity">
    <reaction evidence="1">
        <text>(S)-allantoin + H2O = allantoate + H(+)</text>
        <dbReference type="Rhea" id="RHEA:17029"/>
        <dbReference type="ChEBI" id="CHEBI:15377"/>
        <dbReference type="ChEBI" id="CHEBI:15378"/>
        <dbReference type="ChEBI" id="CHEBI:15678"/>
        <dbReference type="ChEBI" id="CHEBI:17536"/>
        <dbReference type="EC" id="3.5.2.5"/>
    </reaction>
</comment>
<comment type="cofactor">
    <cofactor evidence="1">
        <name>Zn(2+)</name>
        <dbReference type="ChEBI" id="CHEBI:29105"/>
    </cofactor>
    <text evidence="1">Binds 2 Zn(2+) ions per subunit.</text>
</comment>
<comment type="pathway">
    <text evidence="1">Nitrogen metabolism; (S)-allantoin degradation; allantoate from (S)-allantoin: step 1/1.</text>
</comment>
<comment type="subunit">
    <text evidence="1">Homotetramer.</text>
</comment>
<comment type="PTM">
    <text evidence="1">Carboxylation allows a single lysine to coordinate two zinc ions.</text>
</comment>
<comment type="similarity">
    <text evidence="1">Belongs to the metallo-dependent hydrolases superfamily. Allantoinase family.</text>
</comment>
<sequence length="453" mass="49586">MSFDLIIKNGTVILENEARVVDIAVKGGKIAAIGQDLGDAKEVMDASGLVVSPGMVDAHTHISEPGRSHWEGYETGTRAAAKGGITTMIEMPLNQLPATVDRASIELKFDAAKGKLTIDAAQLGGLVSYNIDRLHELDEVGVVGFKCFVATCGDRGIDNDFRDVNDWQFFKGAQKLGELGQPVLVHCENALICDALGEEAKREGRVTAHDYVASRPVFTEVEAIRRVLYLAKVAGCRLHVCHISSPEGVEEVTRARQEGQDVTCESCPHYFVLDTDQFEEIGTLAKCSPPIRDLENQKGMWEKLFNGEIDCLVSDHSPCPPEMKAGNIMEAWGGIAGLQNCMDVMFDEAVQKRGMSLPMFGKLMATNAADIFGLQQKGRIAPGKDADFVFIQPNSSYVLTNDDLEYRHKVSPYVGRTIGARITKTILRGDVIYDIEQGFPVAPKGQFILKHQQ</sequence>
<keyword id="KW-0378">Hydrolase</keyword>
<keyword id="KW-0479">Metal-binding</keyword>
<keyword id="KW-0659">Purine metabolism</keyword>
<keyword id="KW-1185">Reference proteome</keyword>
<keyword id="KW-0862">Zinc</keyword>